<accession>A4RC22</accession>
<accession>G4NJ87</accession>
<accession>Q2KG76</accession>
<comment type="function">
    <text evidence="1">Essential for the assembly of ubiquinol-cytochrome c reductase. It has a direct effect on the correct occurrence of the Rieske protein, core 4, core 5 and apocytochrome b (By similarity).</text>
</comment>
<comment type="subcellular location">
    <subcellularLocation>
        <location evidence="1">Mitochondrion inner membrane</location>
        <topology evidence="1">Single-pass membrane protein</topology>
    </subcellularLocation>
</comment>
<comment type="similarity">
    <text evidence="4">Belongs to the CBP4 family.</text>
</comment>
<comment type="sequence caution" evidence="4">
    <conflict type="erroneous gene model prediction">
        <sequence resource="EMBL-CDS" id="EAQ71052"/>
    </conflict>
</comment>
<keyword id="KW-0143">Chaperone</keyword>
<keyword id="KW-0175">Coiled coil</keyword>
<keyword id="KW-0472">Membrane</keyword>
<keyword id="KW-0496">Mitochondrion</keyword>
<keyword id="KW-0999">Mitochondrion inner membrane</keyword>
<keyword id="KW-1185">Reference proteome</keyword>
<keyword id="KW-0812">Transmembrane</keyword>
<keyword id="KW-1133">Transmembrane helix</keyword>
<protein>
    <recommendedName>
        <fullName>Assembly factor CBP4</fullName>
    </recommendedName>
    <alternativeName>
        <fullName>Cytochrome b mRNA-processing protein 4</fullName>
    </alternativeName>
</protein>
<reference key="1">
    <citation type="submission" date="2005-01" db="EMBL/GenBank/DDBJ databases">
        <title>The sequence of Magnaporthe grisea chromosome 7.</title>
        <authorList>
            <person name="Thon M.R."/>
            <person name="Pan H."/>
            <person name="Diener A."/>
            <person name="Papalas J."/>
            <person name="Taro A."/>
            <person name="Mitchell T.K."/>
            <person name="Dean R.A."/>
        </authorList>
    </citation>
    <scope>NUCLEOTIDE SEQUENCE [LARGE SCALE GENOMIC DNA]</scope>
    <source>
        <strain>70-15 / ATCC MYA-4617 / FGSC 8958</strain>
    </source>
</reference>
<reference key="2">
    <citation type="journal article" date="2005" name="Nature">
        <title>The genome sequence of the rice blast fungus Magnaporthe grisea.</title>
        <authorList>
            <person name="Dean R.A."/>
            <person name="Talbot N.J."/>
            <person name="Ebbole D.J."/>
            <person name="Farman M.L."/>
            <person name="Mitchell T.K."/>
            <person name="Orbach M.J."/>
            <person name="Thon M.R."/>
            <person name="Kulkarni R."/>
            <person name="Xu J.-R."/>
            <person name="Pan H."/>
            <person name="Read N.D."/>
            <person name="Lee Y.-H."/>
            <person name="Carbone I."/>
            <person name="Brown D."/>
            <person name="Oh Y.Y."/>
            <person name="Donofrio N."/>
            <person name="Jeong J.S."/>
            <person name="Soanes D.M."/>
            <person name="Djonovic S."/>
            <person name="Kolomiets E."/>
            <person name="Rehmeyer C."/>
            <person name="Li W."/>
            <person name="Harding M."/>
            <person name="Kim S."/>
            <person name="Lebrun M.-H."/>
            <person name="Bohnert H."/>
            <person name="Coughlan S."/>
            <person name="Butler J."/>
            <person name="Calvo S.E."/>
            <person name="Ma L.-J."/>
            <person name="Nicol R."/>
            <person name="Purcell S."/>
            <person name="Nusbaum C."/>
            <person name="Galagan J.E."/>
            <person name="Birren B.W."/>
        </authorList>
    </citation>
    <scope>NUCLEOTIDE SEQUENCE [LARGE SCALE GENOMIC DNA]</scope>
    <source>
        <strain>70-15 / ATCC MYA-4617 / FGSC 8958</strain>
    </source>
</reference>
<feature type="chain" id="PRO_0000330131" description="Assembly factor CBP4">
    <location>
        <begin position="1"/>
        <end position="130"/>
    </location>
</feature>
<feature type="transmembrane region" description="Helical" evidence="2">
    <location>
        <begin position="14"/>
        <end position="34"/>
    </location>
</feature>
<feature type="region of interest" description="Disordered" evidence="3">
    <location>
        <begin position="99"/>
        <end position="130"/>
    </location>
</feature>
<feature type="coiled-coil region" evidence="2">
    <location>
        <begin position="86"/>
        <end position="125"/>
    </location>
</feature>
<feature type="compositionally biased region" description="Basic and acidic residues" evidence="3">
    <location>
        <begin position="108"/>
        <end position="124"/>
    </location>
</feature>
<name>CBP4_PYRO7</name>
<dbReference type="EMBL" id="CM000230">
    <property type="protein sequence ID" value="EAQ71052.1"/>
    <property type="status" value="ALT_SEQ"/>
    <property type="molecule type" value="Genomic_DNA"/>
</dbReference>
<dbReference type="EMBL" id="CM001237">
    <property type="protein sequence ID" value="EHA46303.1"/>
    <property type="molecule type" value="Genomic_DNA"/>
</dbReference>
<dbReference type="RefSeq" id="XP_003721046.1">
    <property type="nucleotide sequence ID" value="XM_003720998.1"/>
</dbReference>
<dbReference type="EnsemblFungi" id="MGG_02714T0">
    <property type="protein sequence ID" value="MGG_02714T0"/>
    <property type="gene ID" value="MGG_02714"/>
</dbReference>
<dbReference type="GeneID" id="2682314"/>
<dbReference type="KEGG" id="mgr:MGG_02714"/>
<dbReference type="VEuPathDB" id="FungiDB:MGG_02714"/>
<dbReference type="eggNOG" id="ENOG502S2G8">
    <property type="taxonomic scope" value="Eukaryota"/>
</dbReference>
<dbReference type="HOGENOM" id="CLU_136894_1_1_1"/>
<dbReference type="InParanoid" id="A4RC22"/>
<dbReference type="OMA" id="DKPIWVV"/>
<dbReference type="OrthoDB" id="5576752at2759"/>
<dbReference type="Proteomes" id="UP000009058">
    <property type="component" value="Chromosome 7"/>
</dbReference>
<dbReference type="GO" id="GO:0005743">
    <property type="term" value="C:mitochondrial inner membrane"/>
    <property type="evidence" value="ECO:0007669"/>
    <property type="project" value="UniProtKB-SubCell"/>
</dbReference>
<dbReference type="GO" id="GO:0034551">
    <property type="term" value="P:mitochondrial respiratory chain complex III assembly"/>
    <property type="evidence" value="ECO:0007669"/>
    <property type="project" value="TreeGrafter"/>
</dbReference>
<dbReference type="InterPro" id="IPR012420">
    <property type="entry name" value="Cbp4"/>
</dbReference>
<dbReference type="PANTHER" id="PTHR28202">
    <property type="entry name" value="ASSEMBLY FACTOR CBP4"/>
    <property type="match status" value="1"/>
</dbReference>
<dbReference type="PANTHER" id="PTHR28202:SF1">
    <property type="entry name" value="ASSEMBLY FACTOR CBP4"/>
    <property type="match status" value="1"/>
</dbReference>
<dbReference type="Pfam" id="PF07960">
    <property type="entry name" value="CBP4"/>
    <property type="match status" value="1"/>
</dbReference>
<proteinExistence type="inferred from homology"/>
<evidence type="ECO:0000250" key="1"/>
<evidence type="ECO:0000255" key="2"/>
<evidence type="ECO:0000256" key="3">
    <source>
        <dbReference type="SAM" id="MobiDB-lite"/>
    </source>
</evidence>
<evidence type="ECO:0000305" key="4"/>
<sequence length="130" mass="14916">MAPKAPNYKLWAKMILGGAGIAVGGPAFVMYISPTEEELFKRYNPDLQKRALESRYERQKEYDDFVTELKKSAKSDKNIWITQQIEAEKKEKLARQMASANAAAEQARMQEEEHAKIEQMRREAGLPPTR</sequence>
<gene>
    <name type="primary">CBP4</name>
    <name type="ORF">MGG_02714</name>
</gene>
<organism>
    <name type="scientific">Pyricularia oryzae (strain 70-15 / ATCC MYA-4617 / FGSC 8958)</name>
    <name type="common">Rice blast fungus</name>
    <name type="synonym">Magnaporthe oryzae</name>
    <dbReference type="NCBI Taxonomy" id="242507"/>
    <lineage>
        <taxon>Eukaryota</taxon>
        <taxon>Fungi</taxon>
        <taxon>Dikarya</taxon>
        <taxon>Ascomycota</taxon>
        <taxon>Pezizomycotina</taxon>
        <taxon>Sordariomycetes</taxon>
        <taxon>Sordariomycetidae</taxon>
        <taxon>Magnaporthales</taxon>
        <taxon>Pyriculariaceae</taxon>
        <taxon>Pyricularia</taxon>
    </lineage>
</organism>